<organism>
    <name type="scientific">African swine fever virus (isolate Warthog/Namibia/Wart80/1980)</name>
    <name type="common">ASFV</name>
    <dbReference type="NCBI Taxonomy" id="561444"/>
    <lineage>
        <taxon>Viruses</taxon>
        <taxon>Varidnaviria</taxon>
        <taxon>Bamfordvirae</taxon>
        <taxon>Nucleocytoviricota</taxon>
        <taxon>Pokkesviricetes</taxon>
        <taxon>Asfuvirales</taxon>
        <taxon>Asfarviridae</taxon>
        <taxon>Asfivirus</taxon>
        <taxon>African swine fever virus</taxon>
    </lineage>
</organism>
<feature type="chain" id="PRO_0000373367" description="Inner membrane protein p22">
    <location>
        <begin position="1"/>
        <end position="177"/>
    </location>
</feature>
<feature type="topological domain" description="Intravirion" evidence="2">
    <location>
        <begin position="1"/>
        <end position="7"/>
    </location>
</feature>
<feature type="transmembrane region" description="Helical" evidence="2">
    <location>
        <begin position="8"/>
        <end position="28"/>
    </location>
</feature>
<feature type="topological domain" description="Virion surface" evidence="2">
    <location>
        <begin position="29"/>
        <end position="177"/>
    </location>
</feature>
<gene>
    <name type="ordered locus">War-003</name>
</gene>
<dbReference type="EMBL" id="AY261366">
    <property type="status" value="NOT_ANNOTATED_CDS"/>
    <property type="molecule type" value="Genomic_DNA"/>
</dbReference>
<dbReference type="SMR" id="P0C9W3"/>
<dbReference type="Proteomes" id="UP000000858">
    <property type="component" value="Segment"/>
</dbReference>
<dbReference type="GO" id="GO:0020002">
    <property type="term" value="C:host cell plasma membrane"/>
    <property type="evidence" value="ECO:0007669"/>
    <property type="project" value="UniProtKB-SubCell"/>
</dbReference>
<dbReference type="GO" id="GO:0016020">
    <property type="term" value="C:membrane"/>
    <property type="evidence" value="ECO:0007669"/>
    <property type="project" value="UniProtKB-KW"/>
</dbReference>
<dbReference type="GO" id="GO:0055036">
    <property type="term" value="C:virion membrane"/>
    <property type="evidence" value="ECO:0007669"/>
    <property type="project" value="UniProtKB-SubCell"/>
</dbReference>
<comment type="subcellular location">
    <subcellularLocation>
        <location evidence="1">Virion membrane</location>
        <topology evidence="2">Single-pass membrane protein</topology>
    </subcellularLocation>
    <subcellularLocation>
        <location evidence="1">Host cell membrane</location>
        <topology evidence="2">Single-pass membrane protein</topology>
    </subcellularLocation>
    <text evidence="1">Part of the virion inner membrane.</text>
</comment>
<comment type="induction">
    <text evidence="3">Expressed in the late phase of the viral replicative cycle.</text>
</comment>
<comment type="similarity">
    <text evidence="3">Belongs to the asfivirus inner membrane protein p22 family.</text>
</comment>
<keyword id="KW-0244">Early protein</keyword>
<keyword id="KW-1032">Host cell membrane</keyword>
<keyword id="KW-1043">Host membrane</keyword>
<keyword id="KW-0472">Membrane</keyword>
<keyword id="KW-0812">Transmembrane</keyword>
<keyword id="KW-1133">Transmembrane helix</keyword>
<keyword id="KW-0946">Virion</keyword>
<proteinExistence type="inferred from homology"/>
<evidence type="ECO:0000250" key="1">
    <source>
        <dbReference type="UniProtKB" id="P23169"/>
    </source>
</evidence>
<evidence type="ECO:0000255" key="2"/>
<evidence type="ECO:0000305" key="3"/>
<reference key="1">
    <citation type="submission" date="2003-03" db="EMBL/GenBank/DDBJ databases">
        <title>African swine fever virus genomes.</title>
        <authorList>
            <person name="Kutish G.F."/>
            <person name="Rock D.L."/>
        </authorList>
    </citation>
    <scope>NUCLEOTIDE SEQUENCE [LARGE SCALE GENOMIC DNA]</scope>
</reference>
<organismHost>
    <name type="scientific">Ornithodoros</name>
    <name type="common">relapsing fever ticks</name>
    <dbReference type="NCBI Taxonomy" id="6937"/>
</organismHost>
<organismHost>
    <name type="scientific">Phacochoerus aethiopicus</name>
    <name type="common">Warthog</name>
    <dbReference type="NCBI Taxonomy" id="85517"/>
</organismHost>
<organismHost>
    <name type="scientific">Phacochoerus africanus</name>
    <name type="common">Warthog</name>
    <dbReference type="NCBI Taxonomy" id="41426"/>
</organismHost>
<organismHost>
    <name type="scientific">Potamochoerus larvatus</name>
    <name type="common">Bushpig</name>
    <dbReference type="NCBI Taxonomy" id="273792"/>
</organismHost>
<organismHost>
    <name type="scientific">Sus scrofa</name>
    <name type="common">Pig</name>
    <dbReference type="NCBI Taxonomy" id="9823"/>
</organismHost>
<sequence length="177" mass="20148">MFNIKMTISVLLIALIVLLIIILVVFLYYKKQQPPKKVCKVDKDCGSGEHCVRGSCSSLSCLDAVKTDKRNIKIDSNISSCEFTPNFYRFMDTAADEQQEFGKTRHSIKITPSPSESHSPQEVCERYCSWGTDDCTGWEYDGNEKEGTCYIYNNPHHPVLKYGKNHVIALPRNHKHA</sequence>
<protein>
    <recommendedName>
        <fullName evidence="3">Inner membrane protein p22</fullName>
    </recommendedName>
</protein>
<accession>P0C9W3</accession>
<name>P22_ASFWA</name>